<proteinExistence type="predicted"/>
<reference key="1">
    <citation type="journal article" date="2005" name="Nature">
        <title>Sequencing of Aspergillus nidulans and comparative analysis with A. fumigatus and A. oryzae.</title>
        <authorList>
            <person name="Galagan J.E."/>
            <person name="Calvo S.E."/>
            <person name="Cuomo C."/>
            <person name="Ma L.-J."/>
            <person name="Wortman J.R."/>
            <person name="Batzoglou S."/>
            <person name="Lee S.-I."/>
            <person name="Bastuerkmen M."/>
            <person name="Spevak C.C."/>
            <person name="Clutterbuck J."/>
            <person name="Kapitonov V."/>
            <person name="Jurka J."/>
            <person name="Scazzocchio C."/>
            <person name="Farman M.L."/>
            <person name="Butler J."/>
            <person name="Purcell S."/>
            <person name="Harris S."/>
            <person name="Braus G.H."/>
            <person name="Draht O."/>
            <person name="Busch S."/>
            <person name="D'Enfert C."/>
            <person name="Bouchier C."/>
            <person name="Goldman G.H."/>
            <person name="Bell-Pedersen D."/>
            <person name="Griffiths-Jones S."/>
            <person name="Doonan J.H."/>
            <person name="Yu J."/>
            <person name="Vienken K."/>
            <person name="Pain A."/>
            <person name="Freitag M."/>
            <person name="Selker E.U."/>
            <person name="Archer D.B."/>
            <person name="Penalva M.A."/>
            <person name="Oakley B.R."/>
            <person name="Momany M."/>
            <person name="Tanaka T."/>
            <person name="Kumagai T."/>
            <person name="Asai K."/>
            <person name="Machida M."/>
            <person name="Nierman W.C."/>
            <person name="Denning D.W."/>
            <person name="Caddick M.X."/>
            <person name="Hynes M."/>
            <person name="Paoletti M."/>
            <person name="Fischer R."/>
            <person name="Miller B.L."/>
            <person name="Dyer P.S."/>
            <person name="Sachs M.S."/>
            <person name="Osmani S.A."/>
            <person name="Birren B.W."/>
        </authorList>
    </citation>
    <scope>NUCLEOTIDE SEQUENCE [LARGE SCALE GENOMIC DNA]</scope>
    <source>
        <strain>FGSC A4 / ATCC 38163 / CBS 112.46 / NRRL 194 / M139</strain>
    </source>
</reference>
<reference key="2">
    <citation type="journal article" date="2009" name="Fungal Genet. Biol.">
        <title>The 2008 update of the Aspergillus nidulans genome annotation: a community effort.</title>
        <authorList>
            <person name="Wortman J.R."/>
            <person name="Gilsenan J.M."/>
            <person name="Joardar V."/>
            <person name="Deegan J."/>
            <person name="Clutterbuck J."/>
            <person name="Andersen M.R."/>
            <person name="Archer D."/>
            <person name="Bencina M."/>
            <person name="Braus G."/>
            <person name="Coutinho P."/>
            <person name="von Dohren H."/>
            <person name="Doonan J."/>
            <person name="Driessen A.J."/>
            <person name="Durek P."/>
            <person name="Espeso E."/>
            <person name="Fekete E."/>
            <person name="Flipphi M."/>
            <person name="Estrada C.G."/>
            <person name="Geysens S."/>
            <person name="Goldman G."/>
            <person name="de Groot P.W."/>
            <person name="Hansen K."/>
            <person name="Harris S.D."/>
            <person name="Heinekamp T."/>
            <person name="Helmstaedt K."/>
            <person name="Henrissat B."/>
            <person name="Hofmann G."/>
            <person name="Homan T."/>
            <person name="Horio T."/>
            <person name="Horiuchi H."/>
            <person name="James S."/>
            <person name="Jones M."/>
            <person name="Karaffa L."/>
            <person name="Karanyi Z."/>
            <person name="Kato M."/>
            <person name="Keller N."/>
            <person name="Kelly D.E."/>
            <person name="Kiel J.A."/>
            <person name="Kim J.M."/>
            <person name="van der Klei I.J."/>
            <person name="Klis F.M."/>
            <person name="Kovalchuk A."/>
            <person name="Krasevec N."/>
            <person name="Kubicek C.P."/>
            <person name="Liu B."/>
            <person name="Maccabe A."/>
            <person name="Meyer V."/>
            <person name="Mirabito P."/>
            <person name="Miskei M."/>
            <person name="Mos M."/>
            <person name="Mullins J."/>
            <person name="Nelson D.R."/>
            <person name="Nielsen J."/>
            <person name="Oakley B.R."/>
            <person name="Osmani S.A."/>
            <person name="Pakula T."/>
            <person name="Paszewski A."/>
            <person name="Paulsen I."/>
            <person name="Pilsyk S."/>
            <person name="Pocsi I."/>
            <person name="Punt P.J."/>
            <person name="Ram A.F."/>
            <person name="Ren Q."/>
            <person name="Robellet X."/>
            <person name="Robson G."/>
            <person name="Seiboth B."/>
            <person name="van Solingen P."/>
            <person name="Specht T."/>
            <person name="Sun J."/>
            <person name="Taheri-Talesh N."/>
            <person name="Takeshita N."/>
            <person name="Ussery D."/>
            <person name="vanKuyk P.A."/>
            <person name="Visser H."/>
            <person name="van de Vondervoort P.J."/>
            <person name="de Vries R.P."/>
            <person name="Walton J."/>
            <person name="Xiang X."/>
            <person name="Xiong Y."/>
            <person name="Zeng A.P."/>
            <person name="Brandt B.W."/>
            <person name="Cornell M.J."/>
            <person name="van den Hondel C.A."/>
            <person name="Visser J."/>
            <person name="Oliver S.G."/>
            <person name="Turner G."/>
        </authorList>
    </citation>
    <scope>GENOME REANNOTATION</scope>
    <source>
        <strain>FGSC A4 / ATCC 38163 / CBS 112.46 / NRRL 194 / M139</strain>
    </source>
</reference>
<reference key="3">
    <citation type="journal article" date="2014" name="Angew. Chem. Int. Ed.">
        <title>Non-heme dioxygenase catalyzes atypical oxidations of 6,7-bicyclic systems to form the 6,6-quinolone core of viridicatin-type fungal alkaloids.</title>
        <authorList>
            <person name="Ishikawa N."/>
            <person name="Tanaka H."/>
            <person name="Koyama F."/>
            <person name="Noguchi H."/>
            <person name="Wang C.C."/>
            <person name="Hotta K."/>
            <person name="Watanabe K."/>
        </authorList>
    </citation>
    <scope>FUNCTION</scope>
</reference>
<keyword id="KW-0539">Nucleus</keyword>
<keyword id="KW-1185">Reference proteome</keyword>
<keyword id="KW-0804">Transcription</keyword>
<keyword id="KW-0805">Transcription regulation</keyword>
<name>ASQA_EMENI</name>
<gene>
    <name evidence="3" type="primary">asqA</name>
    <name type="ORF">AN9236</name>
</gene>
<evidence type="ECO:0000255" key="1"/>
<evidence type="ECO:0000269" key="2">
    <source>
    </source>
</evidence>
<evidence type="ECO:0000303" key="3">
    <source>
    </source>
</evidence>
<evidence type="ECO:0000305" key="4"/>
<protein>
    <recommendedName>
        <fullName evidence="3">Transcription factor asqA</fullName>
    </recommendedName>
    <alternativeName>
        <fullName evidence="4">4'-methoxyviridicatin/aspoquinolone biosynthesis cluster protein asqA</fullName>
    </alternativeName>
    <alternativeName>
        <fullName evidence="3">Aspoquinolone biosynthesis protein A</fullName>
    </alternativeName>
</protein>
<feature type="chain" id="PRO_0000437609" description="Transcription factor asqA">
    <location>
        <begin position="1"/>
        <end position="565"/>
    </location>
</feature>
<feature type="region of interest" description="Fungal transcription factor domain" evidence="1">
    <location>
        <begin position="204"/>
        <end position="273"/>
    </location>
</feature>
<accession>Q5AR44</accession>
<accession>C8VJP3</accession>
<dbReference type="EMBL" id="BN001306">
    <property type="protein sequence ID" value="CBF82261.1"/>
    <property type="molecule type" value="Genomic_DNA"/>
</dbReference>
<dbReference type="EMBL" id="AACD01000170">
    <property type="protein sequence ID" value="EAA61527.1"/>
    <property type="molecule type" value="Genomic_DNA"/>
</dbReference>
<dbReference type="RefSeq" id="XP_682505.1">
    <property type="nucleotide sequence ID" value="XM_677413.1"/>
</dbReference>
<dbReference type="FunCoup" id="Q5AR44">
    <property type="interactions" value="1229"/>
</dbReference>
<dbReference type="STRING" id="227321.Q5AR44"/>
<dbReference type="EnsemblFungi" id="CBF82261">
    <property type="protein sequence ID" value="CBF82261"/>
    <property type="gene ID" value="ANIA_09236"/>
</dbReference>
<dbReference type="KEGG" id="ani:ANIA_09236"/>
<dbReference type="VEuPathDB" id="FungiDB:AN9236"/>
<dbReference type="eggNOG" id="ENOG502SIGA">
    <property type="taxonomic scope" value="Eukaryota"/>
</dbReference>
<dbReference type="HOGENOM" id="CLU_016509_1_0_1"/>
<dbReference type="InParanoid" id="Q5AR44"/>
<dbReference type="OMA" id="NIWDESH"/>
<dbReference type="OrthoDB" id="2283488at2759"/>
<dbReference type="Proteomes" id="UP000000560">
    <property type="component" value="Chromosome VI"/>
</dbReference>
<dbReference type="GO" id="GO:0005634">
    <property type="term" value="C:nucleus"/>
    <property type="evidence" value="ECO:0000318"/>
    <property type="project" value="GO_Central"/>
</dbReference>
<dbReference type="GO" id="GO:0000981">
    <property type="term" value="F:DNA-binding transcription factor activity, RNA polymerase II-specific"/>
    <property type="evidence" value="ECO:0000318"/>
    <property type="project" value="GO_Central"/>
</dbReference>
<dbReference type="GO" id="GO:0000978">
    <property type="term" value="F:RNA polymerase II cis-regulatory region sequence-specific DNA binding"/>
    <property type="evidence" value="ECO:0000318"/>
    <property type="project" value="GO_Central"/>
</dbReference>
<dbReference type="GO" id="GO:0008270">
    <property type="term" value="F:zinc ion binding"/>
    <property type="evidence" value="ECO:0007669"/>
    <property type="project" value="InterPro"/>
</dbReference>
<dbReference type="GO" id="GO:0006351">
    <property type="term" value="P:DNA-templated transcription"/>
    <property type="evidence" value="ECO:0007669"/>
    <property type="project" value="InterPro"/>
</dbReference>
<dbReference type="CDD" id="cd12148">
    <property type="entry name" value="fungal_TF_MHR"/>
    <property type="match status" value="1"/>
</dbReference>
<dbReference type="InterPro" id="IPR051127">
    <property type="entry name" value="Fungal_SecMet_Regulators"/>
</dbReference>
<dbReference type="InterPro" id="IPR007219">
    <property type="entry name" value="Transcription_factor_dom_fun"/>
</dbReference>
<dbReference type="PANTHER" id="PTHR47424">
    <property type="entry name" value="REGULATORY PROTEIN GAL4"/>
    <property type="match status" value="1"/>
</dbReference>
<dbReference type="PANTHER" id="PTHR47424:SF12">
    <property type="entry name" value="TRANSCRIPTION FACTOR ASQA"/>
    <property type="match status" value="1"/>
</dbReference>
<dbReference type="Pfam" id="PF04082">
    <property type="entry name" value="Fungal_trans"/>
    <property type="match status" value="1"/>
</dbReference>
<dbReference type="SMART" id="SM00906">
    <property type="entry name" value="Fungal_trans"/>
    <property type="match status" value="1"/>
</dbReference>
<comment type="function">
    <text evidence="2">Transcription factor that regulates specifically the 4'-methoxyviridicatin/aspoquinolone biosynthesis cluster (PubMed:25251934).</text>
</comment>
<comment type="subcellular location">
    <subcellularLocation>
        <location evidence="4">Nucleus</location>
    </subcellularLocation>
</comment>
<sequence length="565" mass="63069">MPKRVLKGAAKRAREAKHARDAAKARRLSSFLNVRLNQEHIPHEILPNSASDDKLLDRPVTGADLFAPSSGPSSNSVYPSLLQEEYFWNYFWQTYHVSLCPILDDAQFKQHYQSLLIADGKGRKPSALVDIVVAACMQYHISTLPLGSQSGLVEGKDASVAGRWHYWRGQTLLTYELESLSISTLQCHVLCSIYLCGGSFHNMMDTAMAQAVRTAYILGLHRDLPSTLPEAKREMRRRLWWTVYFMDTRATMKLGRSFMLSESHSMPALCIDSLRVAASSGSTFVPADEDMTWLSFNLRQITLCRTFRAAYTSFHNTDFHLQEGQPIWDRPDALQAGAEIIAKHIPSLDAWCDSVPDALKLKRQDSNSRPFSTDGARVVLELSAPEWLQRQRMLLENTYHHVCVNLFRSMICFPYQPASQVHISENSLPGELATRCAAHAIALTKLTHQVLEETSLLDGWHEAFYCQWDAVMTLIGFVLAYPGSGTVTLEAKSAIHLAIAVSENFGFKFAVGTSASKIVQGLCAKSETLTANEYASAYIGASTQNANIYRIYGGQICGVIDWQNS</sequence>
<organism>
    <name type="scientific">Emericella nidulans (strain FGSC A4 / ATCC 38163 / CBS 112.46 / NRRL 194 / M139)</name>
    <name type="common">Aspergillus nidulans</name>
    <dbReference type="NCBI Taxonomy" id="227321"/>
    <lineage>
        <taxon>Eukaryota</taxon>
        <taxon>Fungi</taxon>
        <taxon>Dikarya</taxon>
        <taxon>Ascomycota</taxon>
        <taxon>Pezizomycotina</taxon>
        <taxon>Eurotiomycetes</taxon>
        <taxon>Eurotiomycetidae</taxon>
        <taxon>Eurotiales</taxon>
        <taxon>Aspergillaceae</taxon>
        <taxon>Aspergillus</taxon>
        <taxon>Aspergillus subgen. Nidulantes</taxon>
    </lineage>
</organism>